<keyword id="KW-0963">Cytoplasm</keyword>
<keyword id="KW-0489">Methyltransferase</keyword>
<keyword id="KW-0545">Nucleotide biosynthesis</keyword>
<keyword id="KW-0808">Transferase</keyword>
<feature type="chain" id="PRO_1000000594" description="Thymidylate synthase">
    <location>
        <begin position="1"/>
        <end position="264"/>
    </location>
</feature>
<feature type="active site" description="Nucleophile" evidence="1">
    <location>
        <position position="146"/>
    </location>
</feature>
<feature type="binding site" description="in other chain" evidence="1">
    <location>
        <position position="21"/>
    </location>
    <ligand>
        <name>dUMP</name>
        <dbReference type="ChEBI" id="CHEBI:246422"/>
        <note>ligand shared between dimeric partners</note>
    </ligand>
</feature>
<feature type="binding site" evidence="1">
    <location>
        <position position="51"/>
    </location>
    <ligand>
        <name>(6R)-5,10-methylene-5,6,7,8-tetrahydrofolate</name>
        <dbReference type="ChEBI" id="CHEBI:15636"/>
    </ligand>
</feature>
<feature type="binding site" evidence="1">
    <location>
        <begin position="126"/>
        <end position="127"/>
    </location>
    <ligand>
        <name>dUMP</name>
        <dbReference type="ChEBI" id="CHEBI:246422"/>
        <note>ligand shared between dimeric partners</note>
    </ligand>
</feature>
<feature type="binding site" description="in other chain" evidence="1">
    <location>
        <begin position="166"/>
        <end position="169"/>
    </location>
    <ligand>
        <name>dUMP</name>
        <dbReference type="ChEBI" id="CHEBI:246422"/>
        <note>ligand shared between dimeric partners</note>
    </ligand>
</feature>
<feature type="binding site" evidence="1">
    <location>
        <position position="169"/>
    </location>
    <ligand>
        <name>(6R)-5,10-methylene-5,6,7,8-tetrahydrofolate</name>
        <dbReference type="ChEBI" id="CHEBI:15636"/>
    </ligand>
</feature>
<feature type="binding site" description="in other chain" evidence="1">
    <location>
        <position position="177"/>
    </location>
    <ligand>
        <name>dUMP</name>
        <dbReference type="ChEBI" id="CHEBI:246422"/>
        <note>ligand shared between dimeric partners</note>
    </ligand>
</feature>
<feature type="binding site" description="in other chain" evidence="1">
    <location>
        <begin position="207"/>
        <end position="209"/>
    </location>
    <ligand>
        <name>dUMP</name>
        <dbReference type="ChEBI" id="CHEBI:246422"/>
        <note>ligand shared between dimeric partners</note>
    </ligand>
</feature>
<feature type="binding site" evidence="1">
    <location>
        <position position="263"/>
    </location>
    <ligand>
        <name>(6R)-5,10-methylene-5,6,7,8-tetrahydrofolate</name>
        <dbReference type="ChEBI" id="CHEBI:15636"/>
    </ligand>
</feature>
<proteinExistence type="inferred from homology"/>
<gene>
    <name evidence="1" type="primary">thyA</name>
    <name type="ordered locus">UTI89_C3229</name>
</gene>
<accession>Q1R7I6</accession>
<comment type="function">
    <text evidence="1">Catalyzes the reductive methylation of 2'-deoxyuridine-5'-monophosphate (dUMP) to 2'-deoxythymidine-5'-monophosphate (dTMP) while utilizing 5,10-methylenetetrahydrofolate (mTHF) as the methyl donor and reductant in the reaction, yielding dihydrofolate (DHF) as a by-product. This enzymatic reaction provides an intracellular de novo source of dTMP, an essential precursor for DNA biosynthesis.</text>
</comment>
<comment type="catalytic activity">
    <reaction evidence="1">
        <text>dUMP + (6R)-5,10-methylene-5,6,7,8-tetrahydrofolate = 7,8-dihydrofolate + dTMP</text>
        <dbReference type="Rhea" id="RHEA:12104"/>
        <dbReference type="ChEBI" id="CHEBI:15636"/>
        <dbReference type="ChEBI" id="CHEBI:57451"/>
        <dbReference type="ChEBI" id="CHEBI:63528"/>
        <dbReference type="ChEBI" id="CHEBI:246422"/>
        <dbReference type="EC" id="2.1.1.45"/>
    </reaction>
</comment>
<comment type="pathway">
    <text evidence="1">Pyrimidine metabolism; dTTP biosynthesis.</text>
</comment>
<comment type="subunit">
    <text evidence="1">Homodimer.</text>
</comment>
<comment type="subcellular location">
    <subcellularLocation>
        <location evidence="1">Cytoplasm</location>
    </subcellularLocation>
</comment>
<comment type="similarity">
    <text evidence="1">Belongs to the thymidylate synthase family. Bacterial-type ThyA subfamily.</text>
</comment>
<organism>
    <name type="scientific">Escherichia coli (strain UTI89 / UPEC)</name>
    <dbReference type="NCBI Taxonomy" id="364106"/>
    <lineage>
        <taxon>Bacteria</taxon>
        <taxon>Pseudomonadati</taxon>
        <taxon>Pseudomonadota</taxon>
        <taxon>Gammaproteobacteria</taxon>
        <taxon>Enterobacterales</taxon>
        <taxon>Enterobacteriaceae</taxon>
        <taxon>Escherichia</taxon>
    </lineage>
</organism>
<sequence length="264" mass="30480">MKQYLELMQKVLDEGTQKNDRTGTGTLSIFGHQMRFNLQDGFPLVTTKRCHLRSIIHELLWFLQGDTNIAYLHENNVTIWDEWADENGDLGPVYGKQWRAWPTPDGRHIDQITTVLNQLKNDPDSRRIIVSAWNVGELDKMALAPCHAFFQFYVADGKLSCQLYQRSCDVFLGLPFNIASYALLVHMMAQQCDLEVGDFVWTGGDTHLYSNHMDQTHLQLSREPRPLPKLIIKRKPESIFDYRFEDFEIEGYDPHPGIKAPVAI</sequence>
<protein>
    <recommendedName>
        <fullName evidence="1">Thymidylate synthase</fullName>
        <shortName evidence="1">TS</shortName>
        <shortName evidence="1">TSase</shortName>
        <ecNumber evidence="1">2.1.1.45</ecNumber>
    </recommendedName>
</protein>
<reference key="1">
    <citation type="journal article" date="2006" name="Proc. Natl. Acad. Sci. U.S.A.">
        <title>Identification of genes subject to positive selection in uropathogenic strains of Escherichia coli: a comparative genomics approach.</title>
        <authorList>
            <person name="Chen S.L."/>
            <person name="Hung C.-S."/>
            <person name="Xu J."/>
            <person name="Reigstad C.S."/>
            <person name="Magrini V."/>
            <person name="Sabo A."/>
            <person name="Blasiar D."/>
            <person name="Bieri T."/>
            <person name="Meyer R.R."/>
            <person name="Ozersky P."/>
            <person name="Armstrong J.R."/>
            <person name="Fulton R.S."/>
            <person name="Latreille J.P."/>
            <person name="Spieth J."/>
            <person name="Hooton T.M."/>
            <person name="Mardis E.R."/>
            <person name="Hultgren S.J."/>
            <person name="Gordon J.I."/>
        </authorList>
    </citation>
    <scope>NUCLEOTIDE SEQUENCE [LARGE SCALE GENOMIC DNA]</scope>
    <source>
        <strain>UTI89 / UPEC</strain>
    </source>
</reference>
<dbReference type="EC" id="2.1.1.45" evidence="1"/>
<dbReference type="EMBL" id="CP000243">
    <property type="protein sequence ID" value="ABE08678.1"/>
    <property type="molecule type" value="Genomic_DNA"/>
</dbReference>
<dbReference type="RefSeq" id="WP_000816232.1">
    <property type="nucleotide sequence ID" value="NZ_CP064825.1"/>
</dbReference>
<dbReference type="SMR" id="Q1R7I6"/>
<dbReference type="GeneID" id="93779171"/>
<dbReference type="KEGG" id="eci:UTI89_C3229"/>
<dbReference type="HOGENOM" id="CLU_021669_0_0_6"/>
<dbReference type="UniPathway" id="UPA00575"/>
<dbReference type="Proteomes" id="UP000001952">
    <property type="component" value="Chromosome"/>
</dbReference>
<dbReference type="GO" id="GO:0005829">
    <property type="term" value="C:cytosol"/>
    <property type="evidence" value="ECO:0007669"/>
    <property type="project" value="TreeGrafter"/>
</dbReference>
<dbReference type="GO" id="GO:0004799">
    <property type="term" value="F:thymidylate synthase activity"/>
    <property type="evidence" value="ECO:0007669"/>
    <property type="project" value="UniProtKB-UniRule"/>
</dbReference>
<dbReference type="GO" id="GO:0006231">
    <property type="term" value="P:dTMP biosynthetic process"/>
    <property type="evidence" value="ECO:0007669"/>
    <property type="project" value="UniProtKB-UniRule"/>
</dbReference>
<dbReference type="GO" id="GO:0006235">
    <property type="term" value="P:dTTP biosynthetic process"/>
    <property type="evidence" value="ECO:0007669"/>
    <property type="project" value="UniProtKB-UniRule"/>
</dbReference>
<dbReference type="GO" id="GO:0032259">
    <property type="term" value="P:methylation"/>
    <property type="evidence" value="ECO:0007669"/>
    <property type="project" value="UniProtKB-KW"/>
</dbReference>
<dbReference type="CDD" id="cd00351">
    <property type="entry name" value="TS_Pyrimidine_HMase"/>
    <property type="match status" value="1"/>
</dbReference>
<dbReference type="FunFam" id="3.30.572.10:FF:000001">
    <property type="entry name" value="Thymidylate synthase"/>
    <property type="match status" value="1"/>
</dbReference>
<dbReference type="Gene3D" id="3.30.572.10">
    <property type="entry name" value="Thymidylate synthase/dCMP hydroxymethylase domain"/>
    <property type="match status" value="1"/>
</dbReference>
<dbReference type="HAMAP" id="MF_00008">
    <property type="entry name" value="Thymidy_synth_bact"/>
    <property type="match status" value="1"/>
</dbReference>
<dbReference type="InterPro" id="IPR045097">
    <property type="entry name" value="Thymidate_synth/dCMP_Mease"/>
</dbReference>
<dbReference type="InterPro" id="IPR023451">
    <property type="entry name" value="Thymidate_synth/dCMP_Mease_dom"/>
</dbReference>
<dbReference type="InterPro" id="IPR036926">
    <property type="entry name" value="Thymidate_synth/dCMP_Mease_sf"/>
</dbReference>
<dbReference type="InterPro" id="IPR000398">
    <property type="entry name" value="Thymidylate_synthase"/>
</dbReference>
<dbReference type="InterPro" id="IPR020940">
    <property type="entry name" value="Thymidylate_synthase_AS"/>
</dbReference>
<dbReference type="NCBIfam" id="NF002497">
    <property type="entry name" value="PRK01827.1-3"/>
    <property type="match status" value="1"/>
</dbReference>
<dbReference type="NCBIfam" id="NF002499">
    <property type="entry name" value="PRK01827.1-5"/>
    <property type="match status" value="1"/>
</dbReference>
<dbReference type="NCBIfam" id="TIGR03284">
    <property type="entry name" value="thym_sym"/>
    <property type="match status" value="2"/>
</dbReference>
<dbReference type="PANTHER" id="PTHR11548:SF9">
    <property type="entry name" value="THYMIDYLATE SYNTHASE"/>
    <property type="match status" value="1"/>
</dbReference>
<dbReference type="PANTHER" id="PTHR11548">
    <property type="entry name" value="THYMIDYLATE SYNTHASE 1"/>
    <property type="match status" value="1"/>
</dbReference>
<dbReference type="Pfam" id="PF00303">
    <property type="entry name" value="Thymidylat_synt"/>
    <property type="match status" value="1"/>
</dbReference>
<dbReference type="PRINTS" id="PR00108">
    <property type="entry name" value="THYMDSNTHASE"/>
</dbReference>
<dbReference type="SUPFAM" id="SSF55831">
    <property type="entry name" value="Thymidylate synthase/dCMP hydroxymethylase"/>
    <property type="match status" value="1"/>
</dbReference>
<dbReference type="PROSITE" id="PS00091">
    <property type="entry name" value="THYMIDYLATE_SYNTHASE"/>
    <property type="match status" value="1"/>
</dbReference>
<evidence type="ECO:0000255" key="1">
    <source>
        <dbReference type="HAMAP-Rule" id="MF_00008"/>
    </source>
</evidence>
<name>TYSY_ECOUT</name>